<feature type="chain" id="PRO_0000228559" description="Ribonuclease 3">
    <location>
        <begin position="1"/>
        <end position="242"/>
    </location>
</feature>
<feature type="domain" description="RNase III" evidence="1">
    <location>
        <begin position="18"/>
        <end position="146"/>
    </location>
</feature>
<feature type="domain" description="DRBM" evidence="1">
    <location>
        <begin position="172"/>
        <end position="241"/>
    </location>
</feature>
<feature type="region of interest" description="Disordered" evidence="2">
    <location>
        <begin position="218"/>
        <end position="242"/>
    </location>
</feature>
<feature type="compositionally biased region" description="Basic and acidic residues" evidence="2">
    <location>
        <begin position="218"/>
        <end position="227"/>
    </location>
</feature>
<feature type="active site" evidence="1">
    <location>
        <position position="63"/>
    </location>
</feature>
<feature type="active site" evidence="1">
    <location>
        <position position="135"/>
    </location>
</feature>
<feature type="binding site" evidence="1">
    <location>
        <position position="59"/>
    </location>
    <ligand>
        <name>Mg(2+)</name>
        <dbReference type="ChEBI" id="CHEBI:18420"/>
    </ligand>
</feature>
<feature type="binding site" evidence="1">
    <location>
        <position position="132"/>
    </location>
    <ligand>
        <name>Mg(2+)</name>
        <dbReference type="ChEBI" id="CHEBI:18420"/>
    </ligand>
</feature>
<feature type="binding site" evidence="1">
    <location>
        <position position="135"/>
    </location>
    <ligand>
        <name>Mg(2+)</name>
        <dbReference type="ChEBI" id="CHEBI:18420"/>
    </ligand>
</feature>
<sequence length="242" mass="27542">MLPRILYMNPIEHVIRQAPAIEAKLGYTFKDPQLLVLAFVHRSFINENREVNQHNERLEFLGDSVLGMLISDYLYCKLPKTPEGQLSYLRSRLVEASSCVHYIQSLDLSGYLLLGKGERMNDGRGRESILADLFEAIIGAIYLDGGLQAAKDFLFKNFHQHIEIILATPLRNWKALLQDYCQKNYQQTPLYQVLHESGPDHSKVFQISVWIQDRELGRGKGTSKKEAQQAAAADALSRVELP</sequence>
<organism>
    <name type="scientific">Protochlamydia amoebophila (strain UWE25)</name>
    <dbReference type="NCBI Taxonomy" id="264201"/>
    <lineage>
        <taxon>Bacteria</taxon>
        <taxon>Pseudomonadati</taxon>
        <taxon>Chlamydiota</taxon>
        <taxon>Chlamydiia</taxon>
        <taxon>Parachlamydiales</taxon>
        <taxon>Parachlamydiaceae</taxon>
        <taxon>Candidatus Protochlamydia</taxon>
    </lineage>
</organism>
<accession>Q6MEK1</accession>
<evidence type="ECO:0000255" key="1">
    <source>
        <dbReference type="HAMAP-Rule" id="MF_00104"/>
    </source>
</evidence>
<evidence type="ECO:0000256" key="2">
    <source>
        <dbReference type="SAM" id="MobiDB-lite"/>
    </source>
</evidence>
<keyword id="KW-0963">Cytoplasm</keyword>
<keyword id="KW-0255">Endonuclease</keyword>
<keyword id="KW-0378">Hydrolase</keyword>
<keyword id="KW-0460">Magnesium</keyword>
<keyword id="KW-0479">Metal-binding</keyword>
<keyword id="KW-0507">mRNA processing</keyword>
<keyword id="KW-0540">Nuclease</keyword>
<keyword id="KW-1185">Reference proteome</keyword>
<keyword id="KW-0694">RNA-binding</keyword>
<keyword id="KW-0698">rRNA processing</keyword>
<keyword id="KW-0699">rRNA-binding</keyword>
<keyword id="KW-0819">tRNA processing</keyword>
<proteinExistence type="inferred from homology"/>
<comment type="function">
    <text evidence="1">Digests double-stranded RNA. Involved in the processing of primary rRNA transcript to yield the immediate precursors to the large and small rRNAs (23S and 16S). Processes some mRNAs, and tRNAs when they are encoded in the rRNA operon. Processes pre-crRNA and tracrRNA of type II CRISPR loci if present in the organism.</text>
</comment>
<comment type="catalytic activity">
    <reaction evidence="1">
        <text>Endonucleolytic cleavage to 5'-phosphomonoester.</text>
        <dbReference type="EC" id="3.1.26.3"/>
    </reaction>
</comment>
<comment type="cofactor">
    <cofactor evidence="1">
        <name>Mg(2+)</name>
        <dbReference type="ChEBI" id="CHEBI:18420"/>
    </cofactor>
</comment>
<comment type="subunit">
    <text evidence="1">Homodimer.</text>
</comment>
<comment type="subcellular location">
    <subcellularLocation>
        <location evidence="1">Cytoplasm</location>
    </subcellularLocation>
</comment>
<comment type="similarity">
    <text evidence="1">Belongs to the ribonuclease III family.</text>
</comment>
<gene>
    <name evidence="1" type="primary">rnc</name>
    <name type="ordered locus">pc0274</name>
</gene>
<dbReference type="EC" id="3.1.26.3" evidence="1"/>
<dbReference type="EMBL" id="BX908798">
    <property type="protein sequence ID" value="CAF22998.1"/>
    <property type="molecule type" value="Genomic_DNA"/>
</dbReference>
<dbReference type="SMR" id="Q6MEK1"/>
<dbReference type="STRING" id="264201.pc0274"/>
<dbReference type="eggNOG" id="COG0571">
    <property type="taxonomic scope" value="Bacteria"/>
</dbReference>
<dbReference type="HOGENOM" id="CLU_000907_1_3_0"/>
<dbReference type="Proteomes" id="UP000000529">
    <property type="component" value="Chromosome"/>
</dbReference>
<dbReference type="GO" id="GO:0005737">
    <property type="term" value="C:cytoplasm"/>
    <property type="evidence" value="ECO:0007669"/>
    <property type="project" value="UniProtKB-SubCell"/>
</dbReference>
<dbReference type="GO" id="GO:0003725">
    <property type="term" value="F:double-stranded RNA binding"/>
    <property type="evidence" value="ECO:0007669"/>
    <property type="project" value="TreeGrafter"/>
</dbReference>
<dbReference type="GO" id="GO:0046872">
    <property type="term" value="F:metal ion binding"/>
    <property type="evidence" value="ECO:0007669"/>
    <property type="project" value="UniProtKB-KW"/>
</dbReference>
<dbReference type="GO" id="GO:0004525">
    <property type="term" value="F:ribonuclease III activity"/>
    <property type="evidence" value="ECO:0007669"/>
    <property type="project" value="UniProtKB-UniRule"/>
</dbReference>
<dbReference type="GO" id="GO:0019843">
    <property type="term" value="F:rRNA binding"/>
    <property type="evidence" value="ECO:0007669"/>
    <property type="project" value="UniProtKB-KW"/>
</dbReference>
<dbReference type="GO" id="GO:0006397">
    <property type="term" value="P:mRNA processing"/>
    <property type="evidence" value="ECO:0007669"/>
    <property type="project" value="UniProtKB-UniRule"/>
</dbReference>
<dbReference type="GO" id="GO:0010468">
    <property type="term" value="P:regulation of gene expression"/>
    <property type="evidence" value="ECO:0007669"/>
    <property type="project" value="TreeGrafter"/>
</dbReference>
<dbReference type="GO" id="GO:0006364">
    <property type="term" value="P:rRNA processing"/>
    <property type="evidence" value="ECO:0007669"/>
    <property type="project" value="UniProtKB-UniRule"/>
</dbReference>
<dbReference type="GO" id="GO:0008033">
    <property type="term" value="P:tRNA processing"/>
    <property type="evidence" value="ECO:0007669"/>
    <property type="project" value="UniProtKB-KW"/>
</dbReference>
<dbReference type="CDD" id="cd10845">
    <property type="entry name" value="DSRM_RNAse_III_family"/>
    <property type="match status" value="1"/>
</dbReference>
<dbReference type="CDD" id="cd00593">
    <property type="entry name" value="RIBOc"/>
    <property type="match status" value="1"/>
</dbReference>
<dbReference type="FunFam" id="1.10.1520.10:FF:000001">
    <property type="entry name" value="Ribonuclease 3"/>
    <property type="match status" value="1"/>
</dbReference>
<dbReference type="Gene3D" id="3.30.160.20">
    <property type="match status" value="1"/>
</dbReference>
<dbReference type="Gene3D" id="1.10.1520.10">
    <property type="entry name" value="Ribonuclease III domain"/>
    <property type="match status" value="1"/>
</dbReference>
<dbReference type="HAMAP" id="MF_00104">
    <property type="entry name" value="RNase_III"/>
    <property type="match status" value="1"/>
</dbReference>
<dbReference type="InterPro" id="IPR014720">
    <property type="entry name" value="dsRBD_dom"/>
</dbReference>
<dbReference type="InterPro" id="IPR011907">
    <property type="entry name" value="RNase_III"/>
</dbReference>
<dbReference type="InterPro" id="IPR000999">
    <property type="entry name" value="RNase_III_dom"/>
</dbReference>
<dbReference type="InterPro" id="IPR036389">
    <property type="entry name" value="RNase_III_sf"/>
</dbReference>
<dbReference type="NCBIfam" id="TIGR02191">
    <property type="entry name" value="RNaseIII"/>
    <property type="match status" value="1"/>
</dbReference>
<dbReference type="PANTHER" id="PTHR11207:SF0">
    <property type="entry name" value="RIBONUCLEASE 3"/>
    <property type="match status" value="1"/>
</dbReference>
<dbReference type="PANTHER" id="PTHR11207">
    <property type="entry name" value="RIBONUCLEASE III"/>
    <property type="match status" value="1"/>
</dbReference>
<dbReference type="Pfam" id="PF00035">
    <property type="entry name" value="dsrm"/>
    <property type="match status" value="1"/>
</dbReference>
<dbReference type="Pfam" id="PF14622">
    <property type="entry name" value="Ribonucleas_3_3"/>
    <property type="match status" value="1"/>
</dbReference>
<dbReference type="SMART" id="SM00358">
    <property type="entry name" value="DSRM"/>
    <property type="match status" value="1"/>
</dbReference>
<dbReference type="SMART" id="SM00535">
    <property type="entry name" value="RIBOc"/>
    <property type="match status" value="1"/>
</dbReference>
<dbReference type="SUPFAM" id="SSF54768">
    <property type="entry name" value="dsRNA-binding domain-like"/>
    <property type="match status" value="1"/>
</dbReference>
<dbReference type="SUPFAM" id="SSF69065">
    <property type="entry name" value="RNase III domain-like"/>
    <property type="match status" value="1"/>
</dbReference>
<dbReference type="PROSITE" id="PS50137">
    <property type="entry name" value="DS_RBD"/>
    <property type="match status" value="1"/>
</dbReference>
<dbReference type="PROSITE" id="PS00517">
    <property type="entry name" value="RNASE_3_1"/>
    <property type="match status" value="1"/>
</dbReference>
<dbReference type="PROSITE" id="PS50142">
    <property type="entry name" value="RNASE_3_2"/>
    <property type="match status" value="1"/>
</dbReference>
<name>RNC_PARUW</name>
<reference key="1">
    <citation type="journal article" date="2004" name="Science">
        <title>Illuminating the evolutionary history of chlamydiae.</title>
        <authorList>
            <person name="Horn M."/>
            <person name="Collingro A."/>
            <person name="Schmitz-Esser S."/>
            <person name="Beier C.L."/>
            <person name="Purkhold U."/>
            <person name="Fartmann B."/>
            <person name="Brandt P."/>
            <person name="Nyakatura G.J."/>
            <person name="Droege M."/>
            <person name="Frishman D."/>
            <person name="Rattei T."/>
            <person name="Mewes H.-W."/>
            <person name="Wagner M."/>
        </authorList>
    </citation>
    <scope>NUCLEOTIDE SEQUENCE [LARGE SCALE GENOMIC DNA]</scope>
    <source>
        <strain>UWE25</strain>
    </source>
</reference>
<protein>
    <recommendedName>
        <fullName evidence="1">Ribonuclease 3</fullName>
        <ecNumber evidence="1">3.1.26.3</ecNumber>
    </recommendedName>
    <alternativeName>
        <fullName evidence="1">Ribonuclease III</fullName>
        <shortName evidence="1">RNase III</shortName>
    </alternativeName>
</protein>